<evidence type="ECO:0000255" key="1">
    <source>
        <dbReference type="HAMAP-Rule" id="MF_00144"/>
    </source>
</evidence>
<dbReference type="EC" id="2.8.1.13" evidence="1"/>
<dbReference type="EMBL" id="CP001139">
    <property type="protein sequence ID" value="ACH67280.1"/>
    <property type="molecule type" value="Genomic_DNA"/>
</dbReference>
<dbReference type="RefSeq" id="WP_005420215.1">
    <property type="nucleotide sequence ID" value="NC_011184.1"/>
</dbReference>
<dbReference type="SMR" id="B5FG83"/>
<dbReference type="KEGG" id="vfm:VFMJ11_1912"/>
<dbReference type="HOGENOM" id="CLU_035188_1_0_6"/>
<dbReference type="Proteomes" id="UP000001857">
    <property type="component" value="Chromosome I"/>
</dbReference>
<dbReference type="GO" id="GO:0005737">
    <property type="term" value="C:cytoplasm"/>
    <property type="evidence" value="ECO:0007669"/>
    <property type="project" value="UniProtKB-SubCell"/>
</dbReference>
<dbReference type="GO" id="GO:0005524">
    <property type="term" value="F:ATP binding"/>
    <property type="evidence" value="ECO:0007669"/>
    <property type="project" value="UniProtKB-KW"/>
</dbReference>
<dbReference type="GO" id="GO:0000049">
    <property type="term" value="F:tRNA binding"/>
    <property type="evidence" value="ECO:0007669"/>
    <property type="project" value="UniProtKB-KW"/>
</dbReference>
<dbReference type="GO" id="GO:0103016">
    <property type="term" value="F:tRNA-uridine 2-sulfurtransferase activity"/>
    <property type="evidence" value="ECO:0007669"/>
    <property type="project" value="UniProtKB-EC"/>
</dbReference>
<dbReference type="GO" id="GO:0002143">
    <property type="term" value="P:tRNA wobble position uridine thiolation"/>
    <property type="evidence" value="ECO:0007669"/>
    <property type="project" value="TreeGrafter"/>
</dbReference>
<dbReference type="CDD" id="cd01998">
    <property type="entry name" value="MnmA_TRMU-like"/>
    <property type="match status" value="1"/>
</dbReference>
<dbReference type="FunFam" id="2.30.30.280:FF:000001">
    <property type="entry name" value="tRNA-specific 2-thiouridylase MnmA"/>
    <property type="match status" value="1"/>
</dbReference>
<dbReference type="FunFam" id="2.40.30.10:FF:000023">
    <property type="entry name" value="tRNA-specific 2-thiouridylase MnmA"/>
    <property type="match status" value="1"/>
</dbReference>
<dbReference type="FunFam" id="3.40.50.620:FF:000004">
    <property type="entry name" value="tRNA-specific 2-thiouridylase MnmA"/>
    <property type="match status" value="1"/>
</dbReference>
<dbReference type="Gene3D" id="2.30.30.280">
    <property type="entry name" value="Adenine nucleotide alpha hydrolases-like domains"/>
    <property type="match status" value="1"/>
</dbReference>
<dbReference type="Gene3D" id="3.40.50.620">
    <property type="entry name" value="HUPs"/>
    <property type="match status" value="1"/>
</dbReference>
<dbReference type="Gene3D" id="2.40.30.10">
    <property type="entry name" value="Translation factors"/>
    <property type="match status" value="1"/>
</dbReference>
<dbReference type="HAMAP" id="MF_00144">
    <property type="entry name" value="tRNA_thiouridyl_MnmA"/>
    <property type="match status" value="1"/>
</dbReference>
<dbReference type="InterPro" id="IPR004506">
    <property type="entry name" value="MnmA-like"/>
</dbReference>
<dbReference type="InterPro" id="IPR046885">
    <property type="entry name" value="MnmA-like_C"/>
</dbReference>
<dbReference type="InterPro" id="IPR046884">
    <property type="entry name" value="MnmA-like_central"/>
</dbReference>
<dbReference type="InterPro" id="IPR023382">
    <property type="entry name" value="MnmA-like_central_sf"/>
</dbReference>
<dbReference type="InterPro" id="IPR014729">
    <property type="entry name" value="Rossmann-like_a/b/a_fold"/>
</dbReference>
<dbReference type="NCBIfam" id="NF001138">
    <property type="entry name" value="PRK00143.1"/>
    <property type="match status" value="1"/>
</dbReference>
<dbReference type="NCBIfam" id="TIGR00420">
    <property type="entry name" value="trmU"/>
    <property type="match status" value="1"/>
</dbReference>
<dbReference type="PANTHER" id="PTHR11933:SF5">
    <property type="entry name" value="MITOCHONDRIAL TRNA-SPECIFIC 2-THIOURIDYLASE 1"/>
    <property type="match status" value="1"/>
</dbReference>
<dbReference type="PANTHER" id="PTHR11933">
    <property type="entry name" value="TRNA 5-METHYLAMINOMETHYL-2-THIOURIDYLATE -METHYLTRANSFERASE"/>
    <property type="match status" value="1"/>
</dbReference>
<dbReference type="Pfam" id="PF03054">
    <property type="entry name" value="tRNA_Me_trans"/>
    <property type="match status" value="1"/>
</dbReference>
<dbReference type="Pfam" id="PF20258">
    <property type="entry name" value="tRNA_Me_trans_C"/>
    <property type="match status" value="1"/>
</dbReference>
<dbReference type="Pfam" id="PF20259">
    <property type="entry name" value="tRNA_Me_trans_M"/>
    <property type="match status" value="1"/>
</dbReference>
<dbReference type="SUPFAM" id="SSF52402">
    <property type="entry name" value="Adenine nucleotide alpha hydrolases-like"/>
    <property type="match status" value="1"/>
</dbReference>
<feature type="chain" id="PRO_1000096309" description="tRNA-specific 2-thiouridylase MnmA">
    <location>
        <begin position="1"/>
        <end position="374"/>
    </location>
</feature>
<feature type="region of interest" description="Interaction with target base in tRNA" evidence="1">
    <location>
        <begin position="98"/>
        <end position="100"/>
    </location>
</feature>
<feature type="region of interest" description="Interaction with tRNA" evidence="1">
    <location>
        <begin position="157"/>
        <end position="159"/>
    </location>
</feature>
<feature type="region of interest" description="Interaction with tRNA" evidence="1">
    <location>
        <begin position="321"/>
        <end position="322"/>
    </location>
</feature>
<feature type="active site" description="Nucleophile" evidence="1">
    <location>
        <position position="103"/>
    </location>
</feature>
<feature type="active site" description="Cysteine persulfide intermediate" evidence="1">
    <location>
        <position position="207"/>
    </location>
</feature>
<feature type="binding site" evidence="1">
    <location>
        <begin position="12"/>
        <end position="19"/>
    </location>
    <ligand>
        <name>ATP</name>
        <dbReference type="ChEBI" id="CHEBI:30616"/>
    </ligand>
</feature>
<feature type="binding site" evidence="1">
    <location>
        <position position="38"/>
    </location>
    <ligand>
        <name>ATP</name>
        <dbReference type="ChEBI" id="CHEBI:30616"/>
    </ligand>
</feature>
<feature type="binding site" evidence="1">
    <location>
        <position position="128"/>
    </location>
    <ligand>
        <name>ATP</name>
        <dbReference type="ChEBI" id="CHEBI:30616"/>
    </ligand>
</feature>
<feature type="site" description="Interaction with tRNA" evidence="1">
    <location>
        <position position="129"/>
    </location>
</feature>
<feature type="site" description="Interaction with tRNA" evidence="1">
    <location>
        <position position="354"/>
    </location>
</feature>
<feature type="disulfide bond" description="Alternate" evidence="1">
    <location>
        <begin position="103"/>
        <end position="207"/>
    </location>
</feature>
<sequence length="374" mass="41790">MSDNSQKKVIVGMSGGVDSSVSAYLLQQQGYQVEGLFMKNWEEDDNEEYCTAAEDLADAQAVCDKLGIHLHTINFAAEYWDNVFEYFLEEYKAGRTPNPDILCNKEIKFKAFLEFADEVLDADFIAMGHYVRRTFPTAEEIANGVKPQMLRGLDSNKDQSYFLYTLSSEQVARSLFPVGELEKPEVRRIAEEQGLITAKKKDSTGICFIGERKFTEFLGKYLPAQPGNIETPEGKVIGQHQGLMYHTLGQRKGLHIGGTKGGGGNEDPWFVGEKDLKRNVLIAVQGKDHPLLKSQGLLASQLHWVDRTPIKAPLSCTVKTRYRQTDIPCTIIPVDDENIKVIFDEPQIAVTPGQSAVFYLDEVCLGGGIIEERI</sequence>
<protein>
    <recommendedName>
        <fullName evidence="1">tRNA-specific 2-thiouridylase MnmA</fullName>
        <ecNumber evidence="1">2.8.1.13</ecNumber>
    </recommendedName>
</protein>
<name>MNMA_ALIFM</name>
<accession>B5FG83</accession>
<keyword id="KW-0067">ATP-binding</keyword>
<keyword id="KW-0963">Cytoplasm</keyword>
<keyword id="KW-1015">Disulfide bond</keyword>
<keyword id="KW-0547">Nucleotide-binding</keyword>
<keyword id="KW-0694">RNA-binding</keyword>
<keyword id="KW-0808">Transferase</keyword>
<keyword id="KW-0819">tRNA processing</keyword>
<keyword id="KW-0820">tRNA-binding</keyword>
<proteinExistence type="inferred from homology"/>
<gene>
    <name evidence="1" type="primary">mnmA</name>
    <name type="ordered locus">VFMJ11_1912</name>
</gene>
<organism>
    <name type="scientific">Aliivibrio fischeri (strain MJ11)</name>
    <name type="common">Vibrio fischeri</name>
    <dbReference type="NCBI Taxonomy" id="388396"/>
    <lineage>
        <taxon>Bacteria</taxon>
        <taxon>Pseudomonadati</taxon>
        <taxon>Pseudomonadota</taxon>
        <taxon>Gammaproteobacteria</taxon>
        <taxon>Vibrionales</taxon>
        <taxon>Vibrionaceae</taxon>
        <taxon>Aliivibrio</taxon>
    </lineage>
</organism>
<comment type="function">
    <text evidence="1">Catalyzes the 2-thiolation of uridine at the wobble position (U34) of tRNA, leading to the formation of s(2)U34.</text>
</comment>
<comment type="catalytic activity">
    <reaction evidence="1">
        <text>S-sulfanyl-L-cysteinyl-[protein] + uridine(34) in tRNA + AH2 + ATP = 2-thiouridine(34) in tRNA + L-cysteinyl-[protein] + A + AMP + diphosphate + H(+)</text>
        <dbReference type="Rhea" id="RHEA:47032"/>
        <dbReference type="Rhea" id="RHEA-COMP:10131"/>
        <dbReference type="Rhea" id="RHEA-COMP:11726"/>
        <dbReference type="Rhea" id="RHEA-COMP:11727"/>
        <dbReference type="Rhea" id="RHEA-COMP:11728"/>
        <dbReference type="ChEBI" id="CHEBI:13193"/>
        <dbReference type="ChEBI" id="CHEBI:15378"/>
        <dbReference type="ChEBI" id="CHEBI:17499"/>
        <dbReference type="ChEBI" id="CHEBI:29950"/>
        <dbReference type="ChEBI" id="CHEBI:30616"/>
        <dbReference type="ChEBI" id="CHEBI:33019"/>
        <dbReference type="ChEBI" id="CHEBI:61963"/>
        <dbReference type="ChEBI" id="CHEBI:65315"/>
        <dbReference type="ChEBI" id="CHEBI:87170"/>
        <dbReference type="ChEBI" id="CHEBI:456215"/>
        <dbReference type="EC" id="2.8.1.13"/>
    </reaction>
</comment>
<comment type="subcellular location">
    <subcellularLocation>
        <location evidence="1">Cytoplasm</location>
    </subcellularLocation>
</comment>
<comment type="similarity">
    <text evidence="1">Belongs to the MnmA/TRMU family.</text>
</comment>
<reference key="1">
    <citation type="submission" date="2008-08" db="EMBL/GenBank/DDBJ databases">
        <title>Complete sequence of Vibrio fischeri strain MJ11.</title>
        <authorList>
            <person name="Mandel M.J."/>
            <person name="Stabb E.V."/>
            <person name="Ruby E.G."/>
            <person name="Ferriera S."/>
            <person name="Johnson J."/>
            <person name="Kravitz S."/>
            <person name="Beeson K."/>
            <person name="Sutton G."/>
            <person name="Rogers Y.-H."/>
            <person name="Friedman R."/>
            <person name="Frazier M."/>
            <person name="Venter J.C."/>
        </authorList>
    </citation>
    <scope>NUCLEOTIDE SEQUENCE [LARGE SCALE GENOMIC DNA]</scope>
    <source>
        <strain>MJ11</strain>
    </source>
</reference>